<feature type="chain" id="PRO_1000022650" description="Trigger factor">
    <location>
        <begin position="1"/>
        <end position="451"/>
    </location>
</feature>
<feature type="domain" description="PPIase FKBP-type" evidence="1">
    <location>
        <begin position="171"/>
        <end position="256"/>
    </location>
</feature>
<dbReference type="EC" id="5.2.1.8" evidence="1"/>
<dbReference type="EMBL" id="CU234118">
    <property type="protein sequence ID" value="CAL77952.1"/>
    <property type="molecule type" value="Genomic_DNA"/>
</dbReference>
<dbReference type="RefSeq" id="WP_011927076.1">
    <property type="nucleotide sequence ID" value="NC_009445.1"/>
</dbReference>
<dbReference type="SMR" id="A4YVM6"/>
<dbReference type="STRING" id="114615.BRADO4200"/>
<dbReference type="KEGG" id="bra:BRADO4200"/>
<dbReference type="eggNOG" id="COG0544">
    <property type="taxonomic scope" value="Bacteria"/>
</dbReference>
<dbReference type="HOGENOM" id="CLU_033058_2_2_5"/>
<dbReference type="OrthoDB" id="9767721at2"/>
<dbReference type="Proteomes" id="UP000001994">
    <property type="component" value="Chromosome"/>
</dbReference>
<dbReference type="GO" id="GO:0005737">
    <property type="term" value="C:cytoplasm"/>
    <property type="evidence" value="ECO:0007669"/>
    <property type="project" value="UniProtKB-SubCell"/>
</dbReference>
<dbReference type="GO" id="GO:0003755">
    <property type="term" value="F:peptidyl-prolyl cis-trans isomerase activity"/>
    <property type="evidence" value="ECO:0007669"/>
    <property type="project" value="UniProtKB-UniRule"/>
</dbReference>
<dbReference type="GO" id="GO:0044183">
    <property type="term" value="F:protein folding chaperone"/>
    <property type="evidence" value="ECO:0007669"/>
    <property type="project" value="TreeGrafter"/>
</dbReference>
<dbReference type="GO" id="GO:0043022">
    <property type="term" value="F:ribosome binding"/>
    <property type="evidence" value="ECO:0007669"/>
    <property type="project" value="TreeGrafter"/>
</dbReference>
<dbReference type="GO" id="GO:0051083">
    <property type="term" value="P:'de novo' cotranslational protein folding"/>
    <property type="evidence" value="ECO:0007669"/>
    <property type="project" value="TreeGrafter"/>
</dbReference>
<dbReference type="GO" id="GO:0051301">
    <property type="term" value="P:cell division"/>
    <property type="evidence" value="ECO:0007669"/>
    <property type="project" value="UniProtKB-KW"/>
</dbReference>
<dbReference type="GO" id="GO:0061077">
    <property type="term" value="P:chaperone-mediated protein folding"/>
    <property type="evidence" value="ECO:0007669"/>
    <property type="project" value="TreeGrafter"/>
</dbReference>
<dbReference type="GO" id="GO:0015031">
    <property type="term" value="P:protein transport"/>
    <property type="evidence" value="ECO:0007669"/>
    <property type="project" value="UniProtKB-UniRule"/>
</dbReference>
<dbReference type="GO" id="GO:0043335">
    <property type="term" value="P:protein unfolding"/>
    <property type="evidence" value="ECO:0007669"/>
    <property type="project" value="TreeGrafter"/>
</dbReference>
<dbReference type="FunFam" id="3.10.50.40:FF:000001">
    <property type="entry name" value="Trigger factor"/>
    <property type="match status" value="1"/>
</dbReference>
<dbReference type="Gene3D" id="3.10.50.40">
    <property type="match status" value="1"/>
</dbReference>
<dbReference type="Gene3D" id="3.30.70.1050">
    <property type="entry name" value="Trigger factor ribosome-binding domain"/>
    <property type="match status" value="1"/>
</dbReference>
<dbReference type="Gene3D" id="1.10.3120.10">
    <property type="entry name" value="Trigger factor, C-terminal domain"/>
    <property type="match status" value="1"/>
</dbReference>
<dbReference type="HAMAP" id="MF_00303">
    <property type="entry name" value="Trigger_factor_Tig"/>
    <property type="match status" value="1"/>
</dbReference>
<dbReference type="InterPro" id="IPR046357">
    <property type="entry name" value="PPIase_dom_sf"/>
</dbReference>
<dbReference type="InterPro" id="IPR001179">
    <property type="entry name" value="PPIase_FKBP_dom"/>
</dbReference>
<dbReference type="InterPro" id="IPR005215">
    <property type="entry name" value="Trig_fac"/>
</dbReference>
<dbReference type="InterPro" id="IPR008880">
    <property type="entry name" value="Trigger_fac_C"/>
</dbReference>
<dbReference type="InterPro" id="IPR037041">
    <property type="entry name" value="Trigger_fac_C_sf"/>
</dbReference>
<dbReference type="InterPro" id="IPR008881">
    <property type="entry name" value="Trigger_fac_ribosome-bd_bac"/>
</dbReference>
<dbReference type="InterPro" id="IPR036611">
    <property type="entry name" value="Trigger_fac_ribosome-bd_sf"/>
</dbReference>
<dbReference type="InterPro" id="IPR027304">
    <property type="entry name" value="Trigger_fact/SurA_dom_sf"/>
</dbReference>
<dbReference type="NCBIfam" id="TIGR00115">
    <property type="entry name" value="tig"/>
    <property type="match status" value="1"/>
</dbReference>
<dbReference type="PANTHER" id="PTHR30560">
    <property type="entry name" value="TRIGGER FACTOR CHAPERONE AND PEPTIDYL-PROLYL CIS/TRANS ISOMERASE"/>
    <property type="match status" value="1"/>
</dbReference>
<dbReference type="PANTHER" id="PTHR30560:SF3">
    <property type="entry name" value="TRIGGER FACTOR-LIKE PROTEIN TIG, CHLOROPLASTIC"/>
    <property type="match status" value="1"/>
</dbReference>
<dbReference type="Pfam" id="PF00254">
    <property type="entry name" value="FKBP_C"/>
    <property type="match status" value="1"/>
</dbReference>
<dbReference type="Pfam" id="PF05698">
    <property type="entry name" value="Trigger_C"/>
    <property type="match status" value="1"/>
</dbReference>
<dbReference type="Pfam" id="PF05697">
    <property type="entry name" value="Trigger_N"/>
    <property type="match status" value="1"/>
</dbReference>
<dbReference type="PIRSF" id="PIRSF003095">
    <property type="entry name" value="Trigger_factor"/>
    <property type="match status" value="1"/>
</dbReference>
<dbReference type="SUPFAM" id="SSF54534">
    <property type="entry name" value="FKBP-like"/>
    <property type="match status" value="1"/>
</dbReference>
<dbReference type="SUPFAM" id="SSF109998">
    <property type="entry name" value="Triger factor/SurA peptide-binding domain-like"/>
    <property type="match status" value="1"/>
</dbReference>
<dbReference type="SUPFAM" id="SSF102735">
    <property type="entry name" value="Trigger factor ribosome-binding domain"/>
    <property type="match status" value="1"/>
</dbReference>
<dbReference type="PROSITE" id="PS50059">
    <property type="entry name" value="FKBP_PPIASE"/>
    <property type="match status" value="1"/>
</dbReference>
<protein>
    <recommendedName>
        <fullName evidence="1">Trigger factor</fullName>
        <shortName evidence="1">TF</shortName>
        <ecNumber evidence="1">5.2.1.8</ecNumber>
    </recommendedName>
    <alternativeName>
        <fullName evidence="1">PPIase</fullName>
    </alternativeName>
</protein>
<proteinExistence type="inferred from homology"/>
<comment type="function">
    <text evidence="1">Involved in protein export. Acts as a chaperone by maintaining the newly synthesized protein in an open conformation. Functions as a peptidyl-prolyl cis-trans isomerase.</text>
</comment>
<comment type="catalytic activity">
    <reaction evidence="1">
        <text>[protein]-peptidylproline (omega=180) = [protein]-peptidylproline (omega=0)</text>
        <dbReference type="Rhea" id="RHEA:16237"/>
        <dbReference type="Rhea" id="RHEA-COMP:10747"/>
        <dbReference type="Rhea" id="RHEA-COMP:10748"/>
        <dbReference type="ChEBI" id="CHEBI:83833"/>
        <dbReference type="ChEBI" id="CHEBI:83834"/>
        <dbReference type="EC" id="5.2.1.8"/>
    </reaction>
</comment>
<comment type="subcellular location">
    <subcellularLocation>
        <location>Cytoplasm</location>
    </subcellularLocation>
    <text evidence="1">About half TF is bound to the ribosome near the polypeptide exit tunnel while the other half is free in the cytoplasm.</text>
</comment>
<comment type="domain">
    <text evidence="1">Consists of 3 domains; the N-terminus binds the ribosome, the middle domain has PPIase activity, while the C-terminus has intrinsic chaperone activity on its own.</text>
</comment>
<comment type="similarity">
    <text evidence="1">Belongs to the FKBP-type PPIase family. Tig subfamily.</text>
</comment>
<sequence length="451" mass="49890">MQVTETLSEGLKHEFQISVPAADLDAKADAKLVDLKDKVRINGFRPGKVPVAHLKKIYGKSVMAETIDQTIRDTNTQIFTERGFRLATEPKVTMPTEEAEVEKILAGQSDLTYSVAIEVVPAITLADFKTFAVEKPVADITDADVDEAIKRLADANRSYAAKAEGAKAASGDRVKVNFKGTIDGVAFDGGTGEGIDVVIGSNTFIPGFEDQLVGIAVGETRTLKVTFPTNYLNNELAGKAAEFETTATAIEAPEDKVVDDEFAKTLGLESLDKLKELMRDRLAGEFTQATRQRVKRALLDRLDETHKFDAPPSLIDEEFNLMWNSVQAEMKSSGKTFADENTTEDKAKEEYRTIADRRVRLGLVLSEIGEKNKITVTDDEVSRAVIERARSMPGREKEVWDFYRSNPQALAQLRAPIYEDKVVDFILELANVTEKKVSKDELFKDDDDKAA</sequence>
<keyword id="KW-0131">Cell cycle</keyword>
<keyword id="KW-0132">Cell division</keyword>
<keyword id="KW-0143">Chaperone</keyword>
<keyword id="KW-0963">Cytoplasm</keyword>
<keyword id="KW-0413">Isomerase</keyword>
<keyword id="KW-1185">Reference proteome</keyword>
<keyword id="KW-0697">Rotamase</keyword>
<organism>
    <name type="scientific">Bradyrhizobium sp. (strain ORS 278)</name>
    <dbReference type="NCBI Taxonomy" id="114615"/>
    <lineage>
        <taxon>Bacteria</taxon>
        <taxon>Pseudomonadati</taxon>
        <taxon>Pseudomonadota</taxon>
        <taxon>Alphaproteobacteria</taxon>
        <taxon>Hyphomicrobiales</taxon>
        <taxon>Nitrobacteraceae</taxon>
        <taxon>Bradyrhizobium</taxon>
    </lineage>
</organism>
<name>TIG_BRASO</name>
<reference key="1">
    <citation type="journal article" date="2007" name="Science">
        <title>Legumes symbioses: absence of nod genes in photosynthetic bradyrhizobia.</title>
        <authorList>
            <person name="Giraud E."/>
            <person name="Moulin L."/>
            <person name="Vallenet D."/>
            <person name="Barbe V."/>
            <person name="Cytryn E."/>
            <person name="Avarre J.-C."/>
            <person name="Jaubert M."/>
            <person name="Simon D."/>
            <person name="Cartieaux F."/>
            <person name="Prin Y."/>
            <person name="Bena G."/>
            <person name="Hannibal L."/>
            <person name="Fardoux J."/>
            <person name="Kojadinovic M."/>
            <person name="Vuillet L."/>
            <person name="Lajus A."/>
            <person name="Cruveiller S."/>
            <person name="Rouy Z."/>
            <person name="Mangenot S."/>
            <person name="Segurens B."/>
            <person name="Dossat C."/>
            <person name="Franck W.L."/>
            <person name="Chang W.-S."/>
            <person name="Saunders E."/>
            <person name="Bruce D."/>
            <person name="Richardson P."/>
            <person name="Normand P."/>
            <person name="Dreyfus B."/>
            <person name="Pignol D."/>
            <person name="Stacey G."/>
            <person name="Emerich D."/>
            <person name="Vermeglio A."/>
            <person name="Medigue C."/>
            <person name="Sadowsky M."/>
        </authorList>
    </citation>
    <scope>NUCLEOTIDE SEQUENCE [LARGE SCALE GENOMIC DNA]</scope>
    <source>
        <strain>ORS 278</strain>
    </source>
</reference>
<gene>
    <name evidence="1" type="primary">tig</name>
    <name type="ordered locus">BRADO4200</name>
</gene>
<evidence type="ECO:0000255" key="1">
    <source>
        <dbReference type="HAMAP-Rule" id="MF_00303"/>
    </source>
</evidence>
<accession>A4YVM6</accession>